<protein>
    <recommendedName>
        <fullName evidence="1">Small ribosomal subunit protein uS5</fullName>
    </recommendedName>
    <alternativeName>
        <fullName evidence="3">30S ribosomal protein S5</fullName>
    </alternativeName>
</protein>
<name>RS5_CERS1</name>
<comment type="function">
    <text evidence="1">With S4 and S12 plays an important role in translational accuracy.</text>
</comment>
<comment type="function">
    <text evidence="1">Located at the back of the 30S subunit body where it stabilizes the conformation of the head with respect to the body.</text>
</comment>
<comment type="subunit">
    <text evidence="1">Part of the 30S ribosomal subunit. Contacts proteins S4 and S8.</text>
</comment>
<comment type="domain">
    <text>The N-terminal domain interacts with the head of the 30S subunit; the C-terminal domain interacts with the body and contacts protein S4. The interaction surface between S4 and S5 is involved in control of translational fidelity.</text>
</comment>
<comment type="similarity">
    <text evidence="1">Belongs to the universal ribosomal protein uS5 family.</text>
</comment>
<sequence>MAERENRRDRRDDRSREETPEFADRLVAINRVSKTVKGGKRFGFAALVVVGDQRGRVGFGKGKAKEVPEAIRKATEQAKRQMIRVALRDGRTLHHDQEGRHGAGKVVMRAAVPGTGIIAGGPMRAVFEMLGIQDVVAKSLGSQNPYNMIRATMDGLKRESSPRQVAQRRGKKVADILKKPEAEVAEA</sequence>
<proteinExistence type="inferred from homology"/>
<organism>
    <name type="scientific">Cereibacter sphaeroides (strain ATCC 17029 / ATH 2.4.9)</name>
    <name type="common">Rhodobacter sphaeroides</name>
    <dbReference type="NCBI Taxonomy" id="349101"/>
    <lineage>
        <taxon>Bacteria</taxon>
        <taxon>Pseudomonadati</taxon>
        <taxon>Pseudomonadota</taxon>
        <taxon>Alphaproteobacteria</taxon>
        <taxon>Rhodobacterales</taxon>
        <taxon>Paracoccaceae</taxon>
        <taxon>Cereibacter</taxon>
    </lineage>
</organism>
<keyword id="KW-0687">Ribonucleoprotein</keyword>
<keyword id="KW-0689">Ribosomal protein</keyword>
<keyword id="KW-0694">RNA-binding</keyword>
<keyword id="KW-0699">rRNA-binding</keyword>
<reference key="1">
    <citation type="submission" date="2007-02" db="EMBL/GenBank/DDBJ databases">
        <title>Complete sequence of chromosome 1 of Rhodobacter sphaeroides ATCC 17029.</title>
        <authorList>
            <person name="Copeland A."/>
            <person name="Lucas S."/>
            <person name="Lapidus A."/>
            <person name="Barry K."/>
            <person name="Detter J.C."/>
            <person name="Glavina del Rio T."/>
            <person name="Hammon N."/>
            <person name="Israni S."/>
            <person name="Dalin E."/>
            <person name="Tice H."/>
            <person name="Pitluck S."/>
            <person name="Kiss H."/>
            <person name="Brettin T."/>
            <person name="Bruce D."/>
            <person name="Han C."/>
            <person name="Tapia R."/>
            <person name="Gilna P."/>
            <person name="Schmutz J."/>
            <person name="Larimer F."/>
            <person name="Land M."/>
            <person name="Hauser L."/>
            <person name="Kyrpides N."/>
            <person name="Mikhailova N."/>
            <person name="Richardson P."/>
            <person name="Mackenzie C."/>
            <person name="Choudhary M."/>
            <person name="Donohue T.J."/>
            <person name="Kaplan S."/>
        </authorList>
    </citation>
    <scope>NUCLEOTIDE SEQUENCE [LARGE SCALE GENOMIC DNA]</scope>
    <source>
        <strain>ATCC 17029 / ATH 2.4.9</strain>
    </source>
</reference>
<accession>A3PGM8</accession>
<feature type="chain" id="PRO_1000086047" description="Small ribosomal subunit protein uS5">
    <location>
        <begin position="1"/>
        <end position="187"/>
    </location>
</feature>
<feature type="domain" description="S5 DRBM" evidence="1">
    <location>
        <begin position="22"/>
        <end position="85"/>
    </location>
</feature>
<feature type="region of interest" description="Disordered" evidence="2">
    <location>
        <begin position="1"/>
        <end position="20"/>
    </location>
</feature>
<evidence type="ECO:0000255" key="1">
    <source>
        <dbReference type="HAMAP-Rule" id="MF_01307"/>
    </source>
</evidence>
<evidence type="ECO:0000256" key="2">
    <source>
        <dbReference type="SAM" id="MobiDB-lite"/>
    </source>
</evidence>
<evidence type="ECO:0000305" key="3"/>
<gene>
    <name evidence="1" type="primary">rpsE</name>
    <name type="ordered locus">Rsph17029_0378</name>
</gene>
<dbReference type="EMBL" id="CP000577">
    <property type="protein sequence ID" value="ABN75494.1"/>
    <property type="molecule type" value="Genomic_DNA"/>
</dbReference>
<dbReference type="RefSeq" id="WP_002722522.1">
    <property type="nucleotide sequence ID" value="NC_009049.1"/>
</dbReference>
<dbReference type="SMR" id="A3PGM8"/>
<dbReference type="GeneID" id="67445517"/>
<dbReference type="KEGG" id="rsh:Rsph17029_0378"/>
<dbReference type="HOGENOM" id="CLU_065898_2_2_5"/>
<dbReference type="GO" id="GO:0015935">
    <property type="term" value="C:small ribosomal subunit"/>
    <property type="evidence" value="ECO:0007669"/>
    <property type="project" value="InterPro"/>
</dbReference>
<dbReference type="GO" id="GO:0019843">
    <property type="term" value="F:rRNA binding"/>
    <property type="evidence" value="ECO:0007669"/>
    <property type="project" value="UniProtKB-UniRule"/>
</dbReference>
<dbReference type="GO" id="GO:0003735">
    <property type="term" value="F:structural constituent of ribosome"/>
    <property type="evidence" value="ECO:0007669"/>
    <property type="project" value="InterPro"/>
</dbReference>
<dbReference type="GO" id="GO:0006412">
    <property type="term" value="P:translation"/>
    <property type="evidence" value="ECO:0007669"/>
    <property type="project" value="UniProtKB-UniRule"/>
</dbReference>
<dbReference type="FunFam" id="3.30.160.20:FF:000001">
    <property type="entry name" value="30S ribosomal protein S5"/>
    <property type="match status" value="1"/>
</dbReference>
<dbReference type="FunFam" id="3.30.230.10:FF:000002">
    <property type="entry name" value="30S ribosomal protein S5"/>
    <property type="match status" value="1"/>
</dbReference>
<dbReference type="Gene3D" id="3.30.160.20">
    <property type="match status" value="1"/>
</dbReference>
<dbReference type="Gene3D" id="3.30.230.10">
    <property type="match status" value="1"/>
</dbReference>
<dbReference type="HAMAP" id="MF_01307_B">
    <property type="entry name" value="Ribosomal_uS5_B"/>
    <property type="match status" value="1"/>
</dbReference>
<dbReference type="InterPro" id="IPR020568">
    <property type="entry name" value="Ribosomal_Su5_D2-typ_SF"/>
</dbReference>
<dbReference type="InterPro" id="IPR000851">
    <property type="entry name" value="Ribosomal_uS5"/>
</dbReference>
<dbReference type="InterPro" id="IPR005712">
    <property type="entry name" value="Ribosomal_uS5_bac-type"/>
</dbReference>
<dbReference type="InterPro" id="IPR005324">
    <property type="entry name" value="Ribosomal_uS5_C"/>
</dbReference>
<dbReference type="InterPro" id="IPR013810">
    <property type="entry name" value="Ribosomal_uS5_N"/>
</dbReference>
<dbReference type="InterPro" id="IPR018192">
    <property type="entry name" value="Ribosomal_uS5_N_CS"/>
</dbReference>
<dbReference type="InterPro" id="IPR014721">
    <property type="entry name" value="Ribsml_uS5_D2-typ_fold_subgr"/>
</dbReference>
<dbReference type="NCBIfam" id="TIGR01021">
    <property type="entry name" value="rpsE_bact"/>
    <property type="match status" value="1"/>
</dbReference>
<dbReference type="PANTHER" id="PTHR48277">
    <property type="entry name" value="MITOCHONDRIAL RIBOSOMAL PROTEIN S5"/>
    <property type="match status" value="1"/>
</dbReference>
<dbReference type="PANTHER" id="PTHR48277:SF1">
    <property type="entry name" value="MITOCHONDRIAL RIBOSOMAL PROTEIN S5"/>
    <property type="match status" value="1"/>
</dbReference>
<dbReference type="Pfam" id="PF00333">
    <property type="entry name" value="Ribosomal_S5"/>
    <property type="match status" value="1"/>
</dbReference>
<dbReference type="Pfam" id="PF03719">
    <property type="entry name" value="Ribosomal_S5_C"/>
    <property type="match status" value="1"/>
</dbReference>
<dbReference type="SUPFAM" id="SSF54768">
    <property type="entry name" value="dsRNA-binding domain-like"/>
    <property type="match status" value="1"/>
</dbReference>
<dbReference type="SUPFAM" id="SSF54211">
    <property type="entry name" value="Ribosomal protein S5 domain 2-like"/>
    <property type="match status" value="1"/>
</dbReference>
<dbReference type="PROSITE" id="PS00585">
    <property type="entry name" value="RIBOSOMAL_S5"/>
    <property type="match status" value="1"/>
</dbReference>
<dbReference type="PROSITE" id="PS50881">
    <property type="entry name" value="S5_DSRBD"/>
    <property type="match status" value="1"/>
</dbReference>